<organismHost>
    <name type="scientific">Acheta domesticus</name>
    <name type="common">House cricket</name>
    <dbReference type="NCBI Taxonomy" id="6997"/>
</organismHost>
<organismHost>
    <name type="scientific">Chilo suppressalis</name>
    <name type="common">Asiatic rice borer moth</name>
    <dbReference type="NCBI Taxonomy" id="168631"/>
</organismHost>
<organismHost>
    <name type="scientific">Gryllus bimaculatus</name>
    <name type="common">Two-spotted cricket</name>
    <dbReference type="NCBI Taxonomy" id="6999"/>
</organismHost>
<organismHost>
    <name type="scientific">Gryllus campestris</name>
    <dbReference type="NCBI Taxonomy" id="58607"/>
</organismHost>
<organismHost>
    <name type="scientific">Spodoptera frugiperda</name>
    <name type="common">Fall armyworm</name>
    <dbReference type="NCBI Taxonomy" id="7108"/>
</organismHost>
<gene>
    <name type="ORF">IIV6-140L</name>
</gene>
<proteinExistence type="predicted"/>
<sequence length="64" mass="7429">MNINDYKDSIIVGVLFLLFTRDWFDELIFGTFPSLKGMPWVFLALKVLGIMVLFYLLDAIINVK</sequence>
<protein>
    <recommendedName>
        <fullName>Uncharacterized protein 140L</fullName>
    </recommendedName>
</protein>
<feature type="chain" id="PRO_0000378009" description="Uncharacterized protein 140L">
    <location>
        <begin position="1"/>
        <end position="64"/>
    </location>
</feature>
<feature type="transmembrane region" description="Helical" evidence="1">
    <location>
        <begin position="41"/>
        <end position="61"/>
    </location>
</feature>
<evidence type="ECO:0000255" key="1"/>
<evidence type="ECO:0000305" key="2"/>
<reference key="1">
    <citation type="journal article" date="2001" name="Virology">
        <title>Analysis of the first complete DNA sequence of an invertebrate iridovirus: coding strategy of the genome of Chilo iridescent virus.</title>
        <authorList>
            <person name="Jakob N.J."/>
            <person name="Mueller K."/>
            <person name="Bahr U."/>
            <person name="Darai G."/>
        </authorList>
    </citation>
    <scope>NUCLEOTIDE SEQUENCE [LARGE SCALE GENOMIC DNA]</scope>
</reference>
<reference key="2">
    <citation type="journal article" date="2007" name="Virol. J.">
        <title>Comparative genomic analysis of the family Iridoviridae: re-annotating and defining the core set of iridovirus genes.</title>
        <authorList>
            <person name="Eaton H.E."/>
            <person name="Metcalf J."/>
            <person name="Penny E."/>
            <person name="Tcherepanov V."/>
            <person name="Upton C."/>
            <person name="Brunetti C.R."/>
        </authorList>
    </citation>
    <scope>GENOME REANNOTATION</scope>
</reference>
<name>140L_IIV6</name>
<dbReference type="EMBL" id="AF303741">
    <property type="protein sequence ID" value="AAB94457.1"/>
    <property type="molecule type" value="Genomic_DNA"/>
</dbReference>
<dbReference type="PIR" id="T03083">
    <property type="entry name" value="T03083"/>
</dbReference>
<dbReference type="RefSeq" id="NP_149603.1">
    <property type="nucleotide sequence ID" value="NC_003038.1"/>
</dbReference>
<dbReference type="SMR" id="O55746"/>
<dbReference type="KEGG" id="vg:1733233"/>
<dbReference type="Proteomes" id="UP000001359">
    <property type="component" value="Genome"/>
</dbReference>
<dbReference type="GO" id="GO:0016020">
    <property type="term" value="C:membrane"/>
    <property type="evidence" value="ECO:0007669"/>
    <property type="project" value="UniProtKB-SubCell"/>
</dbReference>
<organism>
    <name type="scientific">Invertebrate iridescent virus 6</name>
    <name type="common">IIV-6</name>
    <name type="synonym">Chilo iridescent virus</name>
    <dbReference type="NCBI Taxonomy" id="176652"/>
    <lineage>
        <taxon>Viruses</taxon>
        <taxon>Varidnaviria</taxon>
        <taxon>Bamfordvirae</taxon>
        <taxon>Nucleocytoviricota</taxon>
        <taxon>Megaviricetes</taxon>
        <taxon>Pimascovirales</taxon>
        <taxon>Iridoviridae</taxon>
        <taxon>Betairidovirinae</taxon>
        <taxon>Iridovirus</taxon>
    </lineage>
</organism>
<keyword id="KW-0472">Membrane</keyword>
<keyword id="KW-1185">Reference proteome</keyword>
<keyword id="KW-0812">Transmembrane</keyword>
<keyword id="KW-1133">Transmembrane helix</keyword>
<accession>O55746</accession>
<comment type="subcellular location">
    <subcellularLocation>
        <location evidence="2">Membrane</location>
        <topology evidence="2">Single-pass membrane protein</topology>
    </subcellularLocation>
</comment>